<comment type="function">
    <text evidence="1">Catalyzes the reversible interconversion of serine and glycine with tetrahydrofolate (THF) serving as the one-carbon carrier. This reaction serves as the major source of one-carbon groups required for the biosynthesis of purines, thymidylate, methionine, and other important biomolecules. Also exhibits THF-independent aldolase activity toward beta-hydroxyamino acids, producing glycine and aldehydes, via a retro-aldol mechanism.</text>
</comment>
<comment type="catalytic activity">
    <reaction evidence="1">
        <text>(6R)-5,10-methylene-5,6,7,8-tetrahydrofolate + glycine + H2O = (6S)-5,6,7,8-tetrahydrofolate + L-serine</text>
        <dbReference type="Rhea" id="RHEA:15481"/>
        <dbReference type="ChEBI" id="CHEBI:15377"/>
        <dbReference type="ChEBI" id="CHEBI:15636"/>
        <dbReference type="ChEBI" id="CHEBI:33384"/>
        <dbReference type="ChEBI" id="CHEBI:57305"/>
        <dbReference type="ChEBI" id="CHEBI:57453"/>
        <dbReference type="EC" id="2.1.2.1"/>
    </reaction>
</comment>
<comment type="cofactor">
    <cofactor evidence="1">
        <name>pyridoxal 5'-phosphate</name>
        <dbReference type="ChEBI" id="CHEBI:597326"/>
    </cofactor>
</comment>
<comment type="pathway">
    <text evidence="1">One-carbon metabolism; tetrahydrofolate interconversion.</text>
</comment>
<comment type="pathway">
    <text evidence="1">Amino-acid biosynthesis; glycine biosynthesis; glycine from L-serine: step 1/1.</text>
</comment>
<comment type="subunit">
    <text evidence="1">Homodimer.</text>
</comment>
<comment type="subcellular location">
    <subcellularLocation>
        <location evidence="1">Cytoplasm</location>
    </subcellularLocation>
</comment>
<comment type="similarity">
    <text evidence="1">Belongs to the SHMT family.</text>
</comment>
<feature type="chain" id="PRO_0000369955" description="Serine hydroxymethyltransferase">
    <location>
        <begin position="1"/>
        <end position="478"/>
    </location>
</feature>
<feature type="binding site" evidence="1">
    <location>
        <position position="161"/>
    </location>
    <ligand>
        <name>(6S)-5,6,7,8-tetrahydrofolate</name>
        <dbReference type="ChEBI" id="CHEBI:57453"/>
    </ligand>
</feature>
<feature type="binding site" evidence="1">
    <location>
        <begin position="165"/>
        <end position="167"/>
    </location>
    <ligand>
        <name>(6S)-5,6,7,8-tetrahydrofolate</name>
        <dbReference type="ChEBI" id="CHEBI:57453"/>
    </ligand>
</feature>
<feature type="binding site" evidence="1">
    <location>
        <position position="291"/>
    </location>
    <ligand>
        <name>(6S)-5,6,7,8-tetrahydrofolate</name>
        <dbReference type="ChEBI" id="CHEBI:57453"/>
    </ligand>
</feature>
<feature type="site" description="Plays an important role in substrate specificity" evidence="1">
    <location>
        <position position="272"/>
    </location>
</feature>
<feature type="modified residue" description="N6-(pyridoxal phosphate)lysine" evidence="1">
    <location>
        <position position="273"/>
    </location>
</feature>
<keyword id="KW-0028">Amino-acid biosynthesis</keyword>
<keyword id="KW-0963">Cytoplasm</keyword>
<keyword id="KW-0554">One-carbon metabolism</keyword>
<keyword id="KW-0663">Pyridoxal phosphate</keyword>
<keyword id="KW-1185">Reference proteome</keyword>
<keyword id="KW-0808">Transferase</keyword>
<evidence type="ECO:0000255" key="1">
    <source>
        <dbReference type="HAMAP-Rule" id="MF_00051"/>
    </source>
</evidence>
<accession>A4X6P4</accession>
<reference key="1">
    <citation type="journal article" date="2007" name="Proc. Natl. Acad. Sci. U.S.A.">
        <title>Genome sequencing reveals complex secondary metabolome in the marine actinomycete Salinispora tropica.</title>
        <authorList>
            <person name="Udwary D.W."/>
            <person name="Zeigler L."/>
            <person name="Asolkar R.N."/>
            <person name="Singan V."/>
            <person name="Lapidus A."/>
            <person name="Fenical W."/>
            <person name="Jensen P.R."/>
            <person name="Moore B.S."/>
        </authorList>
    </citation>
    <scope>NUCLEOTIDE SEQUENCE [LARGE SCALE GENOMIC DNA]</scope>
    <source>
        <strain>ATCC BAA-916 / DSM 44818 / JCM 13857 / NBRC 105044 / CNB-440</strain>
    </source>
</reference>
<dbReference type="EC" id="2.1.2.1" evidence="1"/>
<dbReference type="EMBL" id="CP000667">
    <property type="protein sequence ID" value="ABP54544.1"/>
    <property type="molecule type" value="Genomic_DNA"/>
</dbReference>
<dbReference type="RefSeq" id="WP_011905974.1">
    <property type="nucleotide sequence ID" value="NC_009380.1"/>
</dbReference>
<dbReference type="SMR" id="A4X6P4"/>
<dbReference type="STRING" id="369723.Strop_2093"/>
<dbReference type="KEGG" id="stp:Strop_2093"/>
<dbReference type="PATRIC" id="fig|369723.5.peg.2145"/>
<dbReference type="eggNOG" id="COG0112">
    <property type="taxonomic scope" value="Bacteria"/>
</dbReference>
<dbReference type="HOGENOM" id="CLU_022477_2_1_11"/>
<dbReference type="UniPathway" id="UPA00193"/>
<dbReference type="UniPathway" id="UPA00288">
    <property type="reaction ID" value="UER01023"/>
</dbReference>
<dbReference type="Proteomes" id="UP000000235">
    <property type="component" value="Chromosome"/>
</dbReference>
<dbReference type="GO" id="GO:0005829">
    <property type="term" value="C:cytosol"/>
    <property type="evidence" value="ECO:0007669"/>
    <property type="project" value="TreeGrafter"/>
</dbReference>
<dbReference type="GO" id="GO:0004372">
    <property type="term" value="F:glycine hydroxymethyltransferase activity"/>
    <property type="evidence" value="ECO:0007669"/>
    <property type="project" value="UniProtKB-UniRule"/>
</dbReference>
<dbReference type="GO" id="GO:0030170">
    <property type="term" value="F:pyridoxal phosphate binding"/>
    <property type="evidence" value="ECO:0007669"/>
    <property type="project" value="UniProtKB-UniRule"/>
</dbReference>
<dbReference type="GO" id="GO:0019264">
    <property type="term" value="P:glycine biosynthetic process from serine"/>
    <property type="evidence" value="ECO:0007669"/>
    <property type="project" value="UniProtKB-UniRule"/>
</dbReference>
<dbReference type="GO" id="GO:0035999">
    <property type="term" value="P:tetrahydrofolate interconversion"/>
    <property type="evidence" value="ECO:0007669"/>
    <property type="project" value="UniProtKB-UniRule"/>
</dbReference>
<dbReference type="CDD" id="cd00378">
    <property type="entry name" value="SHMT"/>
    <property type="match status" value="1"/>
</dbReference>
<dbReference type="FunFam" id="3.40.640.10:FF:000060">
    <property type="entry name" value="Serine hydroxymethyltransferase"/>
    <property type="match status" value="1"/>
</dbReference>
<dbReference type="FunFam" id="3.40.640.10:FF:000065">
    <property type="entry name" value="Serine hydroxymethyltransferase"/>
    <property type="match status" value="1"/>
</dbReference>
<dbReference type="FunFam" id="3.90.1150.10:FF:000064">
    <property type="entry name" value="Serine hydroxymethyltransferase"/>
    <property type="match status" value="1"/>
</dbReference>
<dbReference type="Gene3D" id="3.90.1150.10">
    <property type="entry name" value="Aspartate Aminotransferase, domain 1"/>
    <property type="match status" value="2"/>
</dbReference>
<dbReference type="Gene3D" id="3.40.640.10">
    <property type="entry name" value="Type I PLP-dependent aspartate aminotransferase-like (Major domain)"/>
    <property type="match status" value="2"/>
</dbReference>
<dbReference type="HAMAP" id="MF_00051">
    <property type="entry name" value="SHMT"/>
    <property type="match status" value="1"/>
</dbReference>
<dbReference type="InterPro" id="IPR015424">
    <property type="entry name" value="PyrdxlP-dep_Trfase"/>
</dbReference>
<dbReference type="InterPro" id="IPR015421">
    <property type="entry name" value="PyrdxlP-dep_Trfase_major"/>
</dbReference>
<dbReference type="InterPro" id="IPR015422">
    <property type="entry name" value="PyrdxlP-dep_Trfase_small"/>
</dbReference>
<dbReference type="InterPro" id="IPR001085">
    <property type="entry name" value="Ser_HO-MeTrfase"/>
</dbReference>
<dbReference type="InterPro" id="IPR049943">
    <property type="entry name" value="Ser_HO-MeTrfase-like"/>
</dbReference>
<dbReference type="InterPro" id="IPR019798">
    <property type="entry name" value="Ser_HO-MeTrfase_PLP_BS"/>
</dbReference>
<dbReference type="InterPro" id="IPR039429">
    <property type="entry name" value="SHMT-like_dom"/>
</dbReference>
<dbReference type="NCBIfam" id="NF000586">
    <property type="entry name" value="PRK00011.1"/>
    <property type="match status" value="1"/>
</dbReference>
<dbReference type="NCBIfam" id="NF010094">
    <property type="entry name" value="PRK13580.1"/>
    <property type="match status" value="1"/>
</dbReference>
<dbReference type="PANTHER" id="PTHR11680">
    <property type="entry name" value="SERINE HYDROXYMETHYLTRANSFERASE"/>
    <property type="match status" value="1"/>
</dbReference>
<dbReference type="PANTHER" id="PTHR11680:SF35">
    <property type="entry name" value="SERINE HYDROXYMETHYLTRANSFERASE 1"/>
    <property type="match status" value="1"/>
</dbReference>
<dbReference type="Pfam" id="PF00464">
    <property type="entry name" value="SHMT"/>
    <property type="match status" value="2"/>
</dbReference>
<dbReference type="PIRSF" id="PIRSF000412">
    <property type="entry name" value="SHMT"/>
    <property type="match status" value="1"/>
</dbReference>
<dbReference type="SUPFAM" id="SSF53383">
    <property type="entry name" value="PLP-dependent transferases"/>
    <property type="match status" value="1"/>
</dbReference>
<dbReference type="PROSITE" id="PS00096">
    <property type="entry name" value="SHMT"/>
    <property type="match status" value="1"/>
</dbReference>
<sequence length="478" mass="50917">MSGNAESTAYRSALEVIGAVEPRVANAIRAELTDQRESLKLIASENYASPATLLAMGNWFSDKYAEGTVGRRFYAGCQNVDTVEALAAEHARELFGAPYAYVQPHSGIDANLVAFWAVLADRIESPALRRAQARHVNDLTEADWFALRRELGNQRMLGMSLDAGGHLTHGFRPNISGKMFDQRSYGTDPETGLIDYDGVAEAAREFKPLILLGGYSAYPRKVNFRILREIADSVGATFMVDMAHFAGLVAGKAFTGDFDPVPHAHIVTSTTHKSLRGPRGGLVLCGPELAEQVDRGCPMVLGGPLPQVMAAKAVALAEARRPDFVDYAGRIVANAQALADGLQRRGAQLVTGGTDNHLALIDVTGYGLTGRQAEHALLDSGIVTNRNAIPQDPNGAWYTSGIRVGTPALTTRGLGTAELDATAELIHTVLSHTAPGTNADGTSSKAKYVLDPAVADRVGKQASDLLTGFPLYPAIDLG</sequence>
<organism>
    <name type="scientific">Salinispora tropica (strain ATCC BAA-916 / DSM 44818 / JCM 13857 / NBRC 105044 / CNB-440)</name>
    <dbReference type="NCBI Taxonomy" id="369723"/>
    <lineage>
        <taxon>Bacteria</taxon>
        <taxon>Bacillati</taxon>
        <taxon>Actinomycetota</taxon>
        <taxon>Actinomycetes</taxon>
        <taxon>Micromonosporales</taxon>
        <taxon>Micromonosporaceae</taxon>
        <taxon>Salinispora</taxon>
    </lineage>
</organism>
<proteinExistence type="inferred from homology"/>
<name>GLYA_SALTO</name>
<gene>
    <name evidence="1" type="primary">glyA</name>
    <name type="ordered locus">Strop_2093</name>
</gene>
<protein>
    <recommendedName>
        <fullName evidence="1">Serine hydroxymethyltransferase</fullName>
        <shortName evidence="1">SHMT</shortName>
        <shortName evidence="1">Serine methylase</shortName>
        <ecNumber evidence="1">2.1.2.1</ecNumber>
    </recommendedName>
</protein>